<accession>B6HZX8</accession>
<organism>
    <name type="scientific">Escherichia coli (strain SE11)</name>
    <dbReference type="NCBI Taxonomy" id="409438"/>
    <lineage>
        <taxon>Bacteria</taxon>
        <taxon>Pseudomonadati</taxon>
        <taxon>Pseudomonadota</taxon>
        <taxon>Gammaproteobacteria</taxon>
        <taxon>Enterobacterales</taxon>
        <taxon>Enterobacteriaceae</taxon>
        <taxon>Escherichia</taxon>
    </lineage>
</organism>
<sequence>MNGKKLYISDVTLRDGMHAIRHQYSLENVRQIAKALDDARVDSIEVAHGDGLQGSSFNYGFGAHSDLEWIEAAADVVKHAKIATLLLPGIGTIHDLKNAWQAGARVVRVATHCTEADVSAQHIQYARELGMDTVGFLMMSHMTTPENLAKQAKLMEGYGATCIYVVDSGGAMNMSDIRDRFRALKAELKPETQTGMHAHHNLSLGVANSIAAVEEGCDRIDASLAGMGAGAGNAPLEVFIAAADKLGWQHGTDLYALMDAADDLVRPLQDRPVRVDRETLALGYAGVYSSFLRHCETAAARYGLSAVDILVELGKRRMVGGQEDMIVDVALDLRNNK</sequence>
<gene>
    <name evidence="1" type="primary">mhpE</name>
    <name type="ordered locus">ECSE_0377</name>
</gene>
<evidence type="ECO:0000255" key="1">
    <source>
        <dbReference type="HAMAP-Rule" id="MF_01656"/>
    </source>
</evidence>
<protein>
    <recommendedName>
        <fullName evidence="1">4-hydroxy-2-oxovalerate aldolase</fullName>
        <shortName evidence="1">HOA</shortName>
        <ecNumber evidence="1">4.1.3.39</ecNumber>
    </recommendedName>
    <alternativeName>
        <fullName evidence="1">4-hydroxy-2-keto-pentanoic acid aldolase</fullName>
    </alternativeName>
    <alternativeName>
        <fullName evidence="1">4-hydroxy-2-oxopentanoate aldolase</fullName>
    </alternativeName>
</protein>
<proteinExistence type="inferred from homology"/>
<reference key="1">
    <citation type="journal article" date="2008" name="DNA Res.">
        <title>Complete genome sequence and comparative analysis of the wild-type commensal Escherichia coli strain SE11 isolated from a healthy adult.</title>
        <authorList>
            <person name="Oshima K."/>
            <person name="Toh H."/>
            <person name="Ogura Y."/>
            <person name="Sasamoto H."/>
            <person name="Morita H."/>
            <person name="Park S.-H."/>
            <person name="Ooka T."/>
            <person name="Iyoda S."/>
            <person name="Taylor T.D."/>
            <person name="Hayashi T."/>
            <person name="Itoh K."/>
            <person name="Hattori M."/>
        </authorList>
    </citation>
    <scope>NUCLEOTIDE SEQUENCE [LARGE SCALE GENOMIC DNA]</scope>
    <source>
        <strain>SE11</strain>
    </source>
</reference>
<name>HOA_ECOSE</name>
<keyword id="KW-0058">Aromatic hydrocarbons catabolism</keyword>
<keyword id="KW-0456">Lyase</keyword>
<keyword id="KW-0464">Manganese</keyword>
<keyword id="KW-0479">Metal-binding</keyword>
<dbReference type="EC" id="4.1.3.39" evidence="1"/>
<dbReference type="EMBL" id="AP009240">
    <property type="protein sequence ID" value="BAG75901.1"/>
    <property type="molecule type" value="Genomic_DNA"/>
</dbReference>
<dbReference type="RefSeq" id="WP_001013499.1">
    <property type="nucleotide sequence ID" value="NC_011415.1"/>
</dbReference>
<dbReference type="SMR" id="B6HZX8"/>
<dbReference type="GeneID" id="75202515"/>
<dbReference type="KEGG" id="ecy:ECSE_0377"/>
<dbReference type="HOGENOM" id="CLU_049173_0_0_6"/>
<dbReference type="UniPathway" id="UPA00714"/>
<dbReference type="Proteomes" id="UP000008199">
    <property type="component" value="Chromosome"/>
</dbReference>
<dbReference type="GO" id="GO:0003852">
    <property type="term" value="F:2-isopropylmalate synthase activity"/>
    <property type="evidence" value="ECO:0007669"/>
    <property type="project" value="TreeGrafter"/>
</dbReference>
<dbReference type="GO" id="GO:0008701">
    <property type="term" value="F:4-hydroxy-2-oxovalerate aldolase activity"/>
    <property type="evidence" value="ECO:0007669"/>
    <property type="project" value="UniProtKB-UniRule"/>
</dbReference>
<dbReference type="GO" id="GO:0030145">
    <property type="term" value="F:manganese ion binding"/>
    <property type="evidence" value="ECO:0007669"/>
    <property type="project" value="UniProtKB-UniRule"/>
</dbReference>
<dbReference type="GO" id="GO:0019380">
    <property type="term" value="P:3-phenylpropionate catabolic process"/>
    <property type="evidence" value="ECO:0007669"/>
    <property type="project" value="UniProtKB-UniRule"/>
</dbReference>
<dbReference type="GO" id="GO:0009098">
    <property type="term" value="P:L-leucine biosynthetic process"/>
    <property type="evidence" value="ECO:0007669"/>
    <property type="project" value="TreeGrafter"/>
</dbReference>
<dbReference type="CDD" id="cd07943">
    <property type="entry name" value="DRE_TIM_HOA"/>
    <property type="match status" value="1"/>
</dbReference>
<dbReference type="FunFam" id="1.10.8.60:FF:000042">
    <property type="entry name" value="4-hydroxy-2-oxovalerate aldolase"/>
    <property type="match status" value="1"/>
</dbReference>
<dbReference type="FunFam" id="3.20.20.70:FF:000072">
    <property type="entry name" value="4-hydroxy-2-oxovalerate aldolase"/>
    <property type="match status" value="1"/>
</dbReference>
<dbReference type="Gene3D" id="1.10.8.60">
    <property type="match status" value="1"/>
</dbReference>
<dbReference type="Gene3D" id="3.20.20.70">
    <property type="entry name" value="Aldolase class I"/>
    <property type="match status" value="1"/>
</dbReference>
<dbReference type="HAMAP" id="MF_01656">
    <property type="entry name" value="HOA"/>
    <property type="match status" value="1"/>
</dbReference>
<dbReference type="InterPro" id="IPR050073">
    <property type="entry name" value="2-IPM_HCS-like"/>
</dbReference>
<dbReference type="InterPro" id="IPR017629">
    <property type="entry name" value="4OH_2_O-val_aldolase"/>
</dbReference>
<dbReference type="InterPro" id="IPR013785">
    <property type="entry name" value="Aldolase_TIM"/>
</dbReference>
<dbReference type="InterPro" id="IPR012425">
    <property type="entry name" value="DmpG_comm"/>
</dbReference>
<dbReference type="InterPro" id="IPR035685">
    <property type="entry name" value="DRE_TIM_HOA"/>
</dbReference>
<dbReference type="InterPro" id="IPR000891">
    <property type="entry name" value="PYR_CT"/>
</dbReference>
<dbReference type="NCBIfam" id="TIGR03217">
    <property type="entry name" value="4OH_2_O_val_ald"/>
    <property type="match status" value="1"/>
</dbReference>
<dbReference type="NCBIfam" id="NF006049">
    <property type="entry name" value="PRK08195.1"/>
    <property type="match status" value="1"/>
</dbReference>
<dbReference type="PANTHER" id="PTHR10277:SF9">
    <property type="entry name" value="2-ISOPROPYLMALATE SYNTHASE 1, CHLOROPLASTIC-RELATED"/>
    <property type="match status" value="1"/>
</dbReference>
<dbReference type="PANTHER" id="PTHR10277">
    <property type="entry name" value="HOMOCITRATE SYNTHASE-RELATED"/>
    <property type="match status" value="1"/>
</dbReference>
<dbReference type="Pfam" id="PF07836">
    <property type="entry name" value="DmpG_comm"/>
    <property type="match status" value="1"/>
</dbReference>
<dbReference type="Pfam" id="PF00682">
    <property type="entry name" value="HMGL-like"/>
    <property type="match status" value="1"/>
</dbReference>
<dbReference type="SUPFAM" id="SSF51569">
    <property type="entry name" value="Aldolase"/>
    <property type="match status" value="1"/>
</dbReference>
<dbReference type="SUPFAM" id="SSF89000">
    <property type="entry name" value="post-HMGL domain-like"/>
    <property type="match status" value="1"/>
</dbReference>
<dbReference type="PROSITE" id="PS50991">
    <property type="entry name" value="PYR_CT"/>
    <property type="match status" value="1"/>
</dbReference>
<feature type="chain" id="PRO_0000387827" description="4-hydroxy-2-oxovalerate aldolase">
    <location>
        <begin position="1"/>
        <end position="337"/>
    </location>
</feature>
<feature type="domain" description="Pyruvate carboxyltransferase" evidence="1">
    <location>
        <begin position="6"/>
        <end position="258"/>
    </location>
</feature>
<feature type="active site" description="Proton acceptor" evidence="1">
    <location>
        <position position="18"/>
    </location>
</feature>
<feature type="binding site" evidence="1">
    <location>
        <begin position="14"/>
        <end position="15"/>
    </location>
    <ligand>
        <name>substrate</name>
    </ligand>
</feature>
<feature type="binding site" evidence="1">
    <location>
        <position position="15"/>
    </location>
    <ligand>
        <name>Mn(2+)</name>
        <dbReference type="ChEBI" id="CHEBI:29035"/>
    </ligand>
</feature>
<feature type="binding site" evidence="1">
    <location>
        <position position="168"/>
    </location>
    <ligand>
        <name>substrate</name>
    </ligand>
</feature>
<feature type="binding site" evidence="1">
    <location>
        <position position="197"/>
    </location>
    <ligand>
        <name>Mn(2+)</name>
        <dbReference type="ChEBI" id="CHEBI:29035"/>
    </ligand>
</feature>
<feature type="binding site" evidence="1">
    <location>
        <position position="197"/>
    </location>
    <ligand>
        <name>substrate</name>
    </ligand>
</feature>
<feature type="binding site" evidence="1">
    <location>
        <position position="199"/>
    </location>
    <ligand>
        <name>Mn(2+)</name>
        <dbReference type="ChEBI" id="CHEBI:29035"/>
    </ligand>
</feature>
<feature type="binding site" evidence="1">
    <location>
        <position position="288"/>
    </location>
    <ligand>
        <name>substrate</name>
    </ligand>
</feature>
<feature type="site" description="Transition state stabilizer" evidence="1">
    <location>
        <position position="14"/>
    </location>
</feature>
<comment type="function">
    <text evidence="1">Catalyzes the retro-aldol cleavage of 4-hydroxy-2-oxopentanoate to pyruvate and acetaldehyde. Is involved in the meta-cleavage pathway for the degradation of aromatic compounds.</text>
</comment>
<comment type="catalytic activity">
    <reaction evidence="1">
        <text>(S)-4-hydroxy-2-oxopentanoate = acetaldehyde + pyruvate</text>
        <dbReference type="Rhea" id="RHEA:22624"/>
        <dbReference type="ChEBI" id="CHEBI:15343"/>
        <dbReference type="ChEBI" id="CHEBI:15361"/>
        <dbReference type="ChEBI" id="CHEBI:73143"/>
        <dbReference type="EC" id="4.1.3.39"/>
    </reaction>
</comment>
<comment type="pathway">
    <text evidence="1">Aromatic compound metabolism; 3-phenylpropanoate degradation.</text>
</comment>
<comment type="subunit">
    <text evidence="1">Interacts with MhpF.</text>
</comment>
<comment type="similarity">
    <text evidence="1">Belongs to the 4-hydroxy-2-oxovalerate aldolase family.</text>
</comment>